<reference key="1">
    <citation type="journal article" date="2005" name="Nature">
        <title>Sequencing of Aspergillus nidulans and comparative analysis with A. fumigatus and A. oryzae.</title>
        <authorList>
            <person name="Galagan J.E."/>
            <person name="Calvo S.E."/>
            <person name="Cuomo C."/>
            <person name="Ma L.-J."/>
            <person name="Wortman J.R."/>
            <person name="Batzoglou S."/>
            <person name="Lee S.-I."/>
            <person name="Bastuerkmen M."/>
            <person name="Spevak C.C."/>
            <person name="Clutterbuck J."/>
            <person name="Kapitonov V."/>
            <person name="Jurka J."/>
            <person name="Scazzocchio C."/>
            <person name="Farman M.L."/>
            <person name="Butler J."/>
            <person name="Purcell S."/>
            <person name="Harris S."/>
            <person name="Braus G.H."/>
            <person name="Draht O."/>
            <person name="Busch S."/>
            <person name="D'Enfert C."/>
            <person name="Bouchier C."/>
            <person name="Goldman G.H."/>
            <person name="Bell-Pedersen D."/>
            <person name="Griffiths-Jones S."/>
            <person name="Doonan J.H."/>
            <person name="Yu J."/>
            <person name="Vienken K."/>
            <person name="Pain A."/>
            <person name="Freitag M."/>
            <person name="Selker E.U."/>
            <person name="Archer D.B."/>
            <person name="Penalva M.A."/>
            <person name="Oakley B.R."/>
            <person name="Momany M."/>
            <person name="Tanaka T."/>
            <person name="Kumagai T."/>
            <person name="Asai K."/>
            <person name="Machida M."/>
            <person name="Nierman W.C."/>
            <person name="Denning D.W."/>
            <person name="Caddick M.X."/>
            <person name="Hynes M."/>
            <person name="Paoletti M."/>
            <person name="Fischer R."/>
            <person name="Miller B.L."/>
            <person name="Dyer P.S."/>
            <person name="Sachs M.S."/>
            <person name="Osmani S.A."/>
            <person name="Birren B.W."/>
        </authorList>
    </citation>
    <scope>NUCLEOTIDE SEQUENCE [LARGE SCALE GENOMIC DNA]</scope>
    <source>
        <strain>FGSC A4 / ATCC 38163 / CBS 112.46 / NRRL 194 / M139</strain>
    </source>
</reference>
<reference key="2">
    <citation type="journal article" date="2009" name="Fungal Genet. Biol.">
        <title>The 2008 update of the Aspergillus nidulans genome annotation: a community effort.</title>
        <authorList>
            <person name="Wortman J.R."/>
            <person name="Gilsenan J.M."/>
            <person name="Joardar V."/>
            <person name="Deegan J."/>
            <person name="Clutterbuck J."/>
            <person name="Andersen M.R."/>
            <person name="Archer D."/>
            <person name="Bencina M."/>
            <person name="Braus G."/>
            <person name="Coutinho P."/>
            <person name="von Dohren H."/>
            <person name="Doonan J."/>
            <person name="Driessen A.J."/>
            <person name="Durek P."/>
            <person name="Espeso E."/>
            <person name="Fekete E."/>
            <person name="Flipphi M."/>
            <person name="Estrada C.G."/>
            <person name="Geysens S."/>
            <person name="Goldman G."/>
            <person name="de Groot P.W."/>
            <person name="Hansen K."/>
            <person name="Harris S.D."/>
            <person name="Heinekamp T."/>
            <person name="Helmstaedt K."/>
            <person name="Henrissat B."/>
            <person name="Hofmann G."/>
            <person name="Homan T."/>
            <person name="Horio T."/>
            <person name="Horiuchi H."/>
            <person name="James S."/>
            <person name="Jones M."/>
            <person name="Karaffa L."/>
            <person name="Karanyi Z."/>
            <person name="Kato M."/>
            <person name="Keller N."/>
            <person name="Kelly D.E."/>
            <person name="Kiel J.A."/>
            <person name="Kim J.M."/>
            <person name="van der Klei I.J."/>
            <person name="Klis F.M."/>
            <person name="Kovalchuk A."/>
            <person name="Krasevec N."/>
            <person name="Kubicek C.P."/>
            <person name="Liu B."/>
            <person name="Maccabe A."/>
            <person name="Meyer V."/>
            <person name="Mirabito P."/>
            <person name="Miskei M."/>
            <person name="Mos M."/>
            <person name="Mullins J."/>
            <person name="Nelson D.R."/>
            <person name="Nielsen J."/>
            <person name="Oakley B.R."/>
            <person name="Osmani S.A."/>
            <person name="Pakula T."/>
            <person name="Paszewski A."/>
            <person name="Paulsen I."/>
            <person name="Pilsyk S."/>
            <person name="Pocsi I."/>
            <person name="Punt P.J."/>
            <person name="Ram A.F."/>
            <person name="Ren Q."/>
            <person name="Robellet X."/>
            <person name="Robson G."/>
            <person name="Seiboth B."/>
            <person name="van Solingen P."/>
            <person name="Specht T."/>
            <person name="Sun J."/>
            <person name="Taheri-Talesh N."/>
            <person name="Takeshita N."/>
            <person name="Ussery D."/>
            <person name="vanKuyk P.A."/>
            <person name="Visser H."/>
            <person name="van de Vondervoort P.J."/>
            <person name="de Vries R.P."/>
            <person name="Walton J."/>
            <person name="Xiang X."/>
            <person name="Xiong Y."/>
            <person name="Zeng A.P."/>
            <person name="Brandt B.W."/>
            <person name="Cornell M.J."/>
            <person name="van den Hondel C.A."/>
            <person name="Visser J."/>
            <person name="Oliver S.G."/>
            <person name="Turner G."/>
        </authorList>
    </citation>
    <scope>GENOME REANNOTATION</scope>
    <source>
        <strain>FGSC A4 / ATCC 38163 / CBS 112.46 / NRRL 194 / M139</strain>
    </source>
</reference>
<organism>
    <name type="scientific">Emericella nidulans (strain FGSC A4 / ATCC 38163 / CBS 112.46 / NRRL 194 / M139)</name>
    <name type="common">Aspergillus nidulans</name>
    <dbReference type="NCBI Taxonomy" id="227321"/>
    <lineage>
        <taxon>Eukaryota</taxon>
        <taxon>Fungi</taxon>
        <taxon>Dikarya</taxon>
        <taxon>Ascomycota</taxon>
        <taxon>Pezizomycotina</taxon>
        <taxon>Eurotiomycetes</taxon>
        <taxon>Eurotiomycetidae</taxon>
        <taxon>Eurotiales</taxon>
        <taxon>Aspergillaceae</taxon>
        <taxon>Aspergillus</taxon>
        <taxon>Aspergillus subgen. Nidulantes</taxon>
    </lineage>
</organism>
<evidence type="ECO:0000255" key="1">
    <source>
        <dbReference type="HAMAP-Rule" id="MF_03029"/>
    </source>
</evidence>
<evidence type="ECO:0000256" key="2">
    <source>
        <dbReference type="SAM" id="MobiDB-lite"/>
    </source>
</evidence>
<keyword id="KW-0539">Nucleus</keyword>
<keyword id="KW-1185">Reference proteome</keyword>
<keyword id="KW-0677">Repeat</keyword>
<keyword id="KW-0690">Ribosome biogenesis</keyword>
<keyword id="KW-0698">rRNA processing</keyword>
<keyword id="KW-0853">WD repeat</keyword>
<proteinExistence type="inferred from homology"/>
<sequence>MDTSQVSVSSQAAQRQVRVQLTSKQEDIALPDNTGPILVPTGLKRYALSTLVNNLLGNDKPIPFEFLINGSFLRTSIDEYLTANGISAETTLEIEYVRALIPPLHIASFEHDDWVSSIDVLSTSSPASAGSDAIARGQERILSGSYDGFLRVWNMSSQVIATSPSPTDGGHISSIKAAKFISPSSIASAGLDRTVRLWKYTEAEDGFSGKIVPQVELYGHKSGINSLAVHASTNRILSASADHNVGFWSTKKSDAPAAPESLLPSAASRTSKRRKLNASVSVSQRGPLALLSGHTAPVSDAIFDARDSTVGYSVSWDHSLRTWDLVTAALVDTRTTSHSLLSLQHLPDHNLLATGTSARHITLIDPRASAATISAMTLRGHTNAVVSLARDPHSIYGLISGSHDGTCRIWDLRATKTDKGGAVGESVYSISRKSLEEEGKANSKRVGGEGVKVFSVCWDREVGIVSAGEDKRIQINRGEGVLSSS</sequence>
<accession>Q5B4R1</accession>
<accession>C8V8H1</accession>
<dbReference type="EMBL" id="AACD01000077">
    <property type="protein sequence ID" value="EAA60234.1"/>
    <property type="molecule type" value="Genomic_DNA"/>
</dbReference>
<dbReference type="EMBL" id="BN001303">
    <property type="protein sequence ID" value="CBF77455.1"/>
    <property type="molecule type" value="Genomic_DNA"/>
</dbReference>
<dbReference type="RefSeq" id="XP_662073.1">
    <property type="nucleotide sequence ID" value="XM_656981.1"/>
</dbReference>
<dbReference type="SMR" id="Q5B4R1"/>
<dbReference type="FunCoup" id="Q5B4R1">
    <property type="interactions" value="873"/>
</dbReference>
<dbReference type="STRING" id="227321.Q5B4R1"/>
<dbReference type="EnsemblFungi" id="CBF77455">
    <property type="protein sequence ID" value="CBF77455"/>
    <property type="gene ID" value="ANIA_04469"/>
</dbReference>
<dbReference type="KEGG" id="ani:ANIA_04469"/>
<dbReference type="VEuPathDB" id="FungiDB:AN4469"/>
<dbReference type="eggNOG" id="KOG0313">
    <property type="taxonomic scope" value="Eukaryota"/>
</dbReference>
<dbReference type="HOGENOM" id="CLU_000288_57_0_1"/>
<dbReference type="InParanoid" id="Q5B4R1"/>
<dbReference type="OMA" id="DHKYVEF"/>
<dbReference type="OrthoDB" id="10251381at2759"/>
<dbReference type="Proteomes" id="UP000000560">
    <property type="component" value="Chromosome III"/>
</dbReference>
<dbReference type="GO" id="GO:0005654">
    <property type="term" value="C:nucleoplasm"/>
    <property type="evidence" value="ECO:0007669"/>
    <property type="project" value="UniProtKB-SubCell"/>
</dbReference>
<dbReference type="GO" id="GO:0070545">
    <property type="term" value="C:PeBoW complex"/>
    <property type="evidence" value="ECO:0000318"/>
    <property type="project" value="GO_Central"/>
</dbReference>
<dbReference type="GO" id="GO:0030687">
    <property type="term" value="C:preribosome, large subunit precursor"/>
    <property type="evidence" value="ECO:0000318"/>
    <property type="project" value="GO_Central"/>
</dbReference>
<dbReference type="GO" id="GO:0043021">
    <property type="term" value="F:ribonucleoprotein complex binding"/>
    <property type="evidence" value="ECO:0007669"/>
    <property type="project" value="UniProtKB-UniRule"/>
</dbReference>
<dbReference type="GO" id="GO:0051276">
    <property type="term" value="P:chromosome organization"/>
    <property type="evidence" value="ECO:0007669"/>
    <property type="project" value="EnsemblFungi"/>
</dbReference>
<dbReference type="GO" id="GO:0000466">
    <property type="term" value="P:maturation of 5.8S rRNA from tricistronic rRNA transcript (SSU-rRNA, 5.8S rRNA, LSU-rRNA)"/>
    <property type="evidence" value="ECO:0007669"/>
    <property type="project" value="UniProtKB-UniRule"/>
</dbReference>
<dbReference type="GO" id="GO:0000463">
    <property type="term" value="P:maturation of LSU-rRNA from tricistronic rRNA transcript (SSU-rRNA, 5.8S rRNA, LSU-rRNA)"/>
    <property type="evidence" value="ECO:0007669"/>
    <property type="project" value="UniProtKB-UniRule"/>
</dbReference>
<dbReference type="GO" id="GO:0110136">
    <property type="term" value="P:protein-RNA complex remodeling"/>
    <property type="evidence" value="ECO:0007669"/>
    <property type="project" value="EnsemblFungi"/>
</dbReference>
<dbReference type="GO" id="GO:0042273">
    <property type="term" value="P:ribosomal large subunit biogenesis"/>
    <property type="evidence" value="ECO:0000318"/>
    <property type="project" value="GO_Central"/>
</dbReference>
<dbReference type="CDD" id="cd00200">
    <property type="entry name" value="WD40"/>
    <property type="match status" value="1"/>
</dbReference>
<dbReference type="FunFam" id="2.130.10.10:FF:000593">
    <property type="entry name" value="Ribosome biogenesis protein ytm1"/>
    <property type="match status" value="1"/>
</dbReference>
<dbReference type="Gene3D" id="2.130.10.10">
    <property type="entry name" value="YVTN repeat-like/Quinoprotein amine dehydrogenase"/>
    <property type="match status" value="1"/>
</dbReference>
<dbReference type="HAMAP" id="MF_03029">
    <property type="entry name" value="WDR12"/>
    <property type="match status" value="1"/>
</dbReference>
<dbReference type="InterPro" id="IPR020472">
    <property type="entry name" value="G-protein_beta_WD-40_rep"/>
</dbReference>
<dbReference type="InterPro" id="IPR012972">
    <property type="entry name" value="NLE"/>
</dbReference>
<dbReference type="InterPro" id="IPR015943">
    <property type="entry name" value="WD40/YVTN_repeat-like_dom_sf"/>
</dbReference>
<dbReference type="InterPro" id="IPR019775">
    <property type="entry name" value="WD40_repeat_CS"/>
</dbReference>
<dbReference type="InterPro" id="IPR036322">
    <property type="entry name" value="WD40_repeat_dom_sf"/>
</dbReference>
<dbReference type="InterPro" id="IPR001680">
    <property type="entry name" value="WD40_rpt"/>
</dbReference>
<dbReference type="InterPro" id="IPR028599">
    <property type="entry name" value="WDR12/Ytm1"/>
</dbReference>
<dbReference type="PANTHER" id="PTHR19855:SF11">
    <property type="entry name" value="RIBOSOME BIOGENESIS PROTEIN WDR12"/>
    <property type="match status" value="1"/>
</dbReference>
<dbReference type="PANTHER" id="PTHR19855">
    <property type="entry name" value="WD40 REPEAT PROTEIN 12, 37"/>
    <property type="match status" value="1"/>
</dbReference>
<dbReference type="Pfam" id="PF08154">
    <property type="entry name" value="NLE"/>
    <property type="match status" value="1"/>
</dbReference>
<dbReference type="Pfam" id="PF00400">
    <property type="entry name" value="WD40"/>
    <property type="match status" value="5"/>
</dbReference>
<dbReference type="PRINTS" id="PR00320">
    <property type="entry name" value="GPROTEINBRPT"/>
</dbReference>
<dbReference type="SMART" id="SM00320">
    <property type="entry name" value="WD40"/>
    <property type="match status" value="7"/>
</dbReference>
<dbReference type="SUPFAM" id="SSF50978">
    <property type="entry name" value="WD40 repeat-like"/>
    <property type="match status" value="1"/>
</dbReference>
<dbReference type="PROSITE" id="PS00678">
    <property type="entry name" value="WD_REPEATS_1"/>
    <property type="match status" value="2"/>
</dbReference>
<dbReference type="PROSITE" id="PS50082">
    <property type="entry name" value="WD_REPEATS_2"/>
    <property type="match status" value="4"/>
</dbReference>
<dbReference type="PROSITE" id="PS50294">
    <property type="entry name" value="WD_REPEATS_REGION"/>
    <property type="match status" value="1"/>
</dbReference>
<protein>
    <recommendedName>
        <fullName evidence="1">Ribosome biogenesis protein ytm1</fullName>
    </recommendedName>
</protein>
<gene>
    <name type="primary">ytm1</name>
    <name type="ORF">AN4469</name>
</gene>
<feature type="chain" id="PRO_0000369588" description="Ribosome biogenesis protein ytm1">
    <location>
        <begin position="1"/>
        <end position="485"/>
    </location>
</feature>
<feature type="repeat" description="WD 1">
    <location>
        <begin position="110"/>
        <end position="163"/>
    </location>
</feature>
<feature type="repeat" description="WD 2">
    <location>
        <begin position="170"/>
        <end position="208"/>
    </location>
</feature>
<feature type="repeat" description="WD 3">
    <location>
        <begin position="219"/>
        <end position="258"/>
    </location>
</feature>
<feature type="repeat" description="WD 4">
    <location>
        <begin position="293"/>
        <end position="333"/>
    </location>
</feature>
<feature type="repeat" description="WD 5">
    <location>
        <begin position="335"/>
        <end position="374"/>
    </location>
</feature>
<feature type="repeat" description="WD 6">
    <location>
        <begin position="380"/>
        <end position="420"/>
    </location>
</feature>
<feature type="repeat" description="WD 7">
    <location>
        <begin position="448"/>
        <end position="485"/>
    </location>
</feature>
<feature type="region of interest" description="Ubiquitin-like (UBL) domain" evidence="1">
    <location>
        <begin position="17"/>
        <end position="98"/>
    </location>
</feature>
<feature type="region of interest" description="Disordered" evidence="2">
    <location>
        <begin position="252"/>
        <end position="278"/>
    </location>
</feature>
<feature type="compositionally biased region" description="Low complexity" evidence="2">
    <location>
        <begin position="255"/>
        <end position="268"/>
    </location>
</feature>
<name>YTM1_EMENI</name>
<comment type="function">
    <text evidence="1">Component of the NOP7 complex, which is required for maturation of the 25S and 5.8S ribosomal RNAs and formation of the 60S ribosome.</text>
</comment>
<comment type="subunit">
    <text evidence="1">Component of the NOP7 complex, composed of erb1, nop7 and ytm1. The complex is held together by erb1, which interacts with nop7 via its N-terminal domain and with ytm1 via a high-affinity interaction between the seven-bladed beta-propeller domains of the 2 proteins. The NOP7 complex associates with the 66S pre-ribosome. Interacts (via UBL domain) with mdn1 (via VWFA/MIDAS domain).</text>
</comment>
<comment type="subcellular location">
    <subcellularLocation>
        <location evidence="1">Nucleus</location>
        <location evidence="1">Nucleolus</location>
    </subcellularLocation>
    <subcellularLocation>
        <location evidence="1">Nucleus</location>
        <location evidence="1">Nucleoplasm</location>
    </subcellularLocation>
</comment>
<comment type="similarity">
    <text evidence="1">Belongs to the WD repeat WDR12/YTM1 family.</text>
</comment>